<keyword id="KW-0967">Endosome</keyword>
<keyword id="KW-0333">Golgi apparatus</keyword>
<keyword id="KW-0472">Membrane</keyword>
<keyword id="KW-1185">Reference proteome</keyword>
<keyword id="KW-0812">Transmembrane</keyword>
<keyword id="KW-1133">Transmembrane helix</keyword>
<keyword id="KW-0813">Transport</keyword>
<organism>
    <name type="scientific">Arabidopsis thaliana</name>
    <name type="common">Mouse-ear cress</name>
    <dbReference type="NCBI Taxonomy" id="3702"/>
    <lineage>
        <taxon>Eukaryota</taxon>
        <taxon>Viridiplantae</taxon>
        <taxon>Streptophyta</taxon>
        <taxon>Embryophyta</taxon>
        <taxon>Tracheophyta</taxon>
        <taxon>Spermatophyta</taxon>
        <taxon>Magnoliopsida</taxon>
        <taxon>eudicotyledons</taxon>
        <taxon>Gunneridae</taxon>
        <taxon>Pentapetalae</taxon>
        <taxon>rosids</taxon>
        <taxon>malvids</taxon>
        <taxon>Brassicales</taxon>
        <taxon>Brassicaceae</taxon>
        <taxon>Camelineae</taxon>
        <taxon>Arabidopsis</taxon>
    </lineage>
</organism>
<accession>Q9SLV0</accession>
<accession>Q67YZ2</accession>
<name>DTX48_ARATH</name>
<feature type="chain" id="PRO_0000434082" description="Protein DETOXIFICATION 48">
    <location>
        <begin position="1"/>
        <end position="532"/>
    </location>
</feature>
<feature type="transmembrane region" description="Helical" evidence="1">
    <location>
        <begin position="65"/>
        <end position="85"/>
    </location>
</feature>
<feature type="transmembrane region" description="Helical" evidence="1">
    <location>
        <begin position="95"/>
        <end position="115"/>
    </location>
</feature>
<feature type="transmembrane region" description="Helical" evidence="1">
    <location>
        <begin position="136"/>
        <end position="156"/>
    </location>
</feature>
<feature type="transmembrane region" description="Helical" evidence="1">
    <location>
        <begin position="174"/>
        <end position="194"/>
    </location>
</feature>
<feature type="transmembrane region" description="Helical" evidence="1">
    <location>
        <begin position="211"/>
        <end position="231"/>
    </location>
</feature>
<feature type="transmembrane region" description="Helical" evidence="1">
    <location>
        <begin position="235"/>
        <end position="255"/>
    </location>
</feature>
<feature type="transmembrane region" description="Helical" evidence="1">
    <location>
        <begin position="279"/>
        <end position="301"/>
    </location>
</feature>
<feature type="transmembrane region" description="Helical" evidence="1">
    <location>
        <begin position="322"/>
        <end position="342"/>
    </location>
</feature>
<feature type="transmembrane region" description="Helical" evidence="1">
    <location>
        <begin position="363"/>
        <end position="383"/>
    </location>
</feature>
<feature type="transmembrane region" description="Helical" evidence="1">
    <location>
        <begin position="397"/>
        <end position="417"/>
    </location>
</feature>
<feature type="transmembrane region" description="Helical" evidence="1">
    <location>
        <begin position="437"/>
        <end position="457"/>
    </location>
</feature>
<feature type="transmembrane region" description="Helical" evidence="1">
    <location>
        <begin position="464"/>
        <end position="484"/>
    </location>
</feature>
<feature type="region of interest" description="Disordered" evidence="2">
    <location>
        <begin position="496"/>
        <end position="532"/>
    </location>
</feature>
<feature type="compositionally biased region" description="Polar residues" evidence="2">
    <location>
        <begin position="514"/>
        <end position="523"/>
    </location>
</feature>
<feature type="sequence conflict" description="In Ref. 4; BAD43969/BAD44089." evidence="10" ref="4">
    <original>S</original>
    <variation>P</variation>
    <location>
        <position position="66"/>
    </location>
</feature>
<protein>
    <recommendedName>
        <fullName evidence="6">Protein DETOXIFICATION 48</fullName>
        <shortName evidence="6">AtDTX48</shortName>
    </recommendedName>
    <alternativeName>
        <fullName evidence="10">Multidrug and toxic compound extrusion protein 48</fullName>
        <shortName evidence="10">MATE protein 48</shortName>
    </alternativeName>
    <alternativeName>
        <fullName evidence="9">Protein ABNORMAL SHOOT 4</fullName>
    </alternativeName>
    <alternativeName>
        <fullName evidence="8">Protein BUSH-AND-CHLOROTIC-DWARF 1</fullName>
        <shortName evidence="8">Protein BCD1</shortName>
    </alternativeName>
    <alternativeName>
        <fullName evidence="7">Protein ZRIZI</fullName>
    </alternativeName>
</protein>
<comment type="function">
    <text evidence="3 4 5">Functions as a multidrug and toxin extrusion transporter. Contributes to iron homeostasis during stress responses and senescence (PubMed:22150160). Could be involved in specifying the lateral organ initiation rate (PubMed:21257605). May act as a negative regulator of hypocotyl cell elongation in the light (PubMed:26160579).</text>
</comment>
<comment type="subcellular location">
    <subcellularLocation>
        <location evidence="4">Golgi apparatus membrane</location>
        <topology evidence="4">Multi-pass membrane protein</topology>
    </subcellularLocation>
    <subcellularLocation>
        <location evidence="5">Late endosome membrane</location>
        <topology evidence="5">Multi-pass membrane protein</topology>
    </subcellularLocation>
</comment>
<comment type="tissue specificity">
    <text evidence="3 5">Highly expressed in shoot apices relative to leaves (PubMed:21257605). At vegetative stages, highly expressed at the stipules. At reproductive stages, most highly expressed in the mature pollen. Also expressed in the tips of sepals (PubMed:26160579).</text>
</comment>
<comment type="induction">
    <text evidence="4">Induced by excessive iron, but repressed by iron deficiency. Induced by heat, darkness, osmotic stresses and acid abscisic (ABA).</text>
</comment>
<comment type="disruption phenotype">
    <text evidence="3 4">No visible phenotype.</text>
</comment>
<comment type="miscellaneous">
    <text evidence="3 5">Plants overexpressing DTX48 in initiating leaves are short, produce leaves much faster than wild-type plants and show enhanced growth of axillary buds (PubMed:21257605). Overexpression of DTX48 alters shoot developmental programs leading to a loss of apical dominance phenotype (PubMed:26160579).</text>
</comment>
<comment type="similarity">
    <text evidence="10">Belongs to the multi antimicrobial extrusion (MATE) (TC 2.A.66.1) family.</text>
</comment>
<proteinExistence type="evidence at transcript level"/>
<reference key="1">
    <citation type="journal article" date="1999" name="Gene">
        <title>Isolation and analysis of cDNA within a 300 kb Arabidopsis thaliana genomic region located around the 100 map unit of chromosome 1.</title>
        <authorList>
            <person name="Kato A."/>
            <person name="Suzuki M."/>
            <person name="Kuwahara A."/>
            <person name="Ooe H."/>
            <person name="Higano-Inaba K."/>
            <person name="Komeda Y."/>
        </authorList>
    </citation>
    <scope>NUCLEOTIDE SEQUENCE [MRNA]</scope>
    <source>
        <strain>cv. Columbia</strain>
    </source>
</reference>
<reference key="2">
    <citation type="journal article" date="2000" name="Nature">
        <title>Sequence and analysis of chromosome 1 of the plant Arabidopsis thaliana.</title>
        <authorList>
            <person name="Theologis A."/>
            <person name="Ecker J.R."/>
            <person name="Palm C.J."/>
            <person name="Federspiel N.A."/>
            <person name="Kaul S."/>
            <person name="White O."/>
            <person name="Alonso J."/>
            <person name="Altafi H."/>
            <person name="Araujo R."/>
            <person name="Bowman C.L."/>
            <person name="Brooks S.Y."/>
            <person name="Buehler E."/>
            <person name="Chan A."/>
            <person name="Chao Q."/>
            <person name="Chen H."/>
            <person name="Cheuk R.F."/>
            <person name="Chin C.W."/>
            <person name="Chung M.K."/>
            <person name="Conn L."/>
            <person name="Conway A.B."/>
            <person name="Conway A.R."/>
            <person name="Creasy T.H."/>
            <person name="Dewar K."/>
            <person name="Dunn P."/>
            <person name="Etgu P."/>
            <person name="Feldblyum T.V."/>
            <person name="Feng J.-D."/>
            <person name="Fong B."/>
            <person name="Fujii C.Y."/>
            <person name="Gill J.E."/>
            <person name="Goldsmith A.D."/>
            <person name="Haas B."/>
            <person name="Hansen N.F."/>
            <person name="Hughes B."/>
            <person name="Huizar L."/>
            <person name="Hunter J.L."/>
            <person name="Jenkins J."/>
            <person name="Johnson-Hopson C."/>
            <person name="Khan S."/>
            <person name="Khaykin E."/>
            <person name="Kim C.J."/>
            <person name="Koo H.L."/>
            <person name="Kremenetskaia I."/>
            <person name="Kurtz D.B."/>
            <person name="Kwan A."/>
            <person name="Lam B."/>
            <person name="Langin-Hooper S."/>
            <person name="Lee A."/>
            <person name="Lee J.M."/>
            <person name="Lenz C.A."/>
            <person name="Li J.H."/>
            <person name="Li Y.-P."/>
            <person name="Lin X."/>
            <person name="Liu S.X."/>
            <person name="Liu Z.A."/>
            <person name="Luros J.S."/>
            <person name="Maiti R."/>
            <person name="Marziali A."/>
            <person name="Militscher J."/>
            <person name="Miranda M."/>
            <person name="Nguyen M."/>
            <person name="Nierman W.C."/>
            <person name="Osborne B.I."/>
            <person name="Pai G."/>
            <person name="Peterson J."/>
            <person name="Pham P.K."/>
            <person name="Rizzo M."/>
            <person name="Rooney T."/>
            <person name="Rowley D."/>
            <person name="Sakano H."/>
            <person name="Salzberg S.L."/>
            <person name="Schwartz J.R."/>
            <person name="Shinn P."/>
            <person name="Southwick A.M."/>
            <person name="Sun H."/>
            <person name="Tallon L.J."/>
            <person name="Tambunga G."/>
            <person name="Toriumi M.J."/>
            <person name="Town C.D."/>
            <person name="Utterback T."/>
            <person name="Van Aken S."/>
            <person name="Vaysberg M."/>
            <person name="Vysotskaia V.S."/>
            <person name="Walker M."/>
            <person name="Wu D."/>
            <person name="Yu G."/>
            <person name="Fraser C.M."/>
            <person name="Venter J.C."/>
            <person name="Davis R.W."/>
        </authorList>
    </citation>
    <scope>NUCLEOTIDE SEQUENCE [LARGE SCALE GENOMIC DNA]</scope>
    <source>
        <strain>cv. Columbia</strain>
    </source>
</reference>
<reference key="3">
    <citation type="journal article" date="2017" name="Plant J.">
        <title>Araport11: a complete reannotation of the Arabidopsis thaliana reference genome.</title>
        <authorList>
            <person name="Cheng C.Y."/>
            <person name="Krishnakumar V."/>
            <person name="Chan A.P."/>
            <person name="Thibaud-Nissen F."/>
            <person name="Schobel S."/>
            <person name="Town C.D."/>
        </authorList>
    </citation>
    <scope>GENOME REANNOTATION</scope>
    <source>
        <strain>cv. Columbia</strain>
    </source>
</reference>
<reference key="4">
    <citation type="submission" date="2004-09" db="EMBL/GenBank/DDBJ databases">
        <title>Large-scale analysis of RIKEN Arabidopsis full-length (RAFL) cDNAs.</title>
        <authorList>
            <person name="Totoki Y."/>
            <person name="Seki M."/>
            <person name="Ishida J."/>
            <person name="Nakajima M."/>
            <person name="Enju A."/>
            <person name="Kamiya A."/>
            <person name="Narusaka M."/>
            <person name="Shin-i T."/>
            <person name="Nakagawa M."/>
            <person name="Sakamoto N."/>
            <person name="Oishi K."/>
            <person name="Kohara Y."/>
            <person name="Kobayashi M."/>
            <person name="Toyoda A."/>
            <person name="Sakaki Y."/>
            <person name="Sakurai T."/>
            <person name="Iida K."/>
            <person name="Akiyama K."/>
            <person name="Satou M."/>
            <person name="Toyoda T."/>
            <person name="Konagaya A."/>
            <person name="Carninci P."/>
            <person name="Kawai J."/>
            <person name="Hayashizaki Y."/>
            <person name="Shinozaki K."/>
        </authorList>
    </citation>
    <scope>NUCLEOTIDE SEQUENCE [LARGE SCALE MRNA]</scope>
    <source>
        <strain>cv. Columbia</strain>
    </source>
</reference>
<reference key="5">
    <citation type="journal article" date="2002" name="J. Biol. Chem.">
        <title>Functional cloning and characterization of a plant efflux carrier for multidrug and heavy metal detoxification.</title>
        <authorList>
            <person name="Li L."/>
            <person name="He Z."/>
            <person name="Pandey G.K."/>
            <person name="Tsuchiya T."/>
            <person name="Luan S."/>
        </authorList>
    </citation>
    <scope>GENE FAMILY</scope>
    <scope>NOMENCLATURE</scope>
</reference>
<reference key="6">
    <citation type="journal article" date="2003" name="Eur. J. Biochem.">
        <title>The multidrug/oligosaccharidyl-lipid/polysaccharide (MOP) exporter superfamily.</title>
        <authorList>
            <person name="Hvorup R.N."/>
            <person name="Winnen B."/>
            <person name="Chang A.B."/>
            <person name="Jiang Y."/>
            <person name="Zhou X.F."/>
            <person name="Saier M.H. Jr."/>
        </authorList>
    </citation>
    <scope>GENE FAMILY</scope>
</reference>
<reference key="7">
    <citation type="journal article" date="2011" name="Plant Cell Physiol.">
        <title>From organelle to organ: ZRIZI MATE-Type transporter is an organelle transporter that enhances organ initiation.</title>
        <authorList>
            <person name="Burko Y."/>
            <person name="Geva Y."/>
            <person name="Refael-Cohen A."/>
            <person name="Shleizer-Burko S."/>
            <person name="Shani E."/>
            <person name="Berger Y."/>
            <person name="Halon E."/>
            <person name="Chuck G."/>
            <person name="Moshelion M."/>
            <person name="Ori N."/>
        </authorList>
    </citation>
    <scope>TISSUE SPECIFICITY</scope>
    <scope>DISRUPTION PHENOTYPE</scope>
    <scope>FUNCTION</scope>
</reference>
<reference key="8">
    <citation type="journal article" date="2012" name="Biochem. J.">
        <title>A Golgi-localized MATE transporter mediates iron homoeostasis under osmotic stress in Arabidopsis.</title>
        <authorList>
            <person name="Seo P.J."/>
            <person name="Park J."/>
            <person name="Park M.J."/>
            <person name="Kim Y.S."/>
            <person name="Kim S.G."/>
            <person name="Jung J.H."/>
            <person name="Park C.M."/>
        </authorList>
    </citation>
    <scope>FUNCTION</scope>
    <scope>INDUCTION</scope>
    <scope>SUBCELLULAR LOCATION</scope>
    <scope>DISRUPTION PHENOTYPE</scope>
</reference>
<reference key="9">
    <citation type="journal article" date="2015" name="J. Exp. Bot.">
        <title>A subgroup of MATE transporter genes regulates hypocotyl cell elongation in Arabidopsis.</title>
        <authorList>
            <person name="Wang R."/>
            <person name="Liu X."/>
            <person name="Liang S."/>
            <person name="Ge Q."/>
            <person name="Li Y."/>
            <person name="Shao J."/>
            <person name="Qi Y."/>
            <person name="An L."/>
            <person name="Yu F."/>
        </authorList>
    </citation>
    <scope>TISSUE SPECIFICITY</scope>
    <scope>SUBCELLULAR LOCATION</scope>
    <scope>FUNCTION</scope>
</reference>
<gene>
    <name evidence="6" type="primary">DTX48</name>
    <name evidence="9" type="synonym">ABS4</name>
    <name evidence="8" type="synonym">BCD1</name>
    <name evidence="12" type="synonym">ZF14</name>
    <name evidence="7" type="synonym">ZRZ</name>
    <name evidence="11" type="ordered locus">At1g58340</name>
    <name evidence="12" type="ORF">F19C14.5</name>
</gene>
<sequence length="532" mass="57847">MCNSKPSSASSSLLSCKDKTHISKLETCDTDNPHYSEFRDTDSLDLKRWPSFLEGLEEVKAIGKISGPTAMTGLLMYSRAMISMLFLGYLGELELAGGSLSIGFANITGYSVISGLSMGMEPICGQAYGAKQMKLLGLTLQRTVLLLLSCSVPISFSWLNMRRILLWCGQDEEISSVAQQFLLFAIPDLFLLSLLHPLRIYLRTQNITLPVTYSTAVSVLLHVPLNYLLVVKLEMGVAGVAIAMVLTNLNLVVLLSSFVYFTSVHSDTWVPITIDSLKGWSALLSLAIPTCVSVCLEWWWYEFMIILCGLLANPRATVASMGILIQTTALVYVFPSSLSLGVSTRISNELGAKRPAKARVSMIISLFCAIALGLMAMVFAVLVRHHWGRLFTTDAEILQLTSIALPIVGLCELGNCPQTTGCGVLRGCARPTLGANINLGSFYFVGMPVAILFGFVFKQGFPGLWFGLLAAQATCASLMLCALLRTDWKVQAERAEELTSQTPGKSPPLLPIASSKSRSTSGTEDMMRTMLV</sequence>
<evidence type="ECO:0000255" key="1"/>
<evidence type="ECO:0000256" key="2">
    <source>
        <dbReference type="SAM" id="MobiDB-lite"/>
    </source>
</evidence>
<evidence type="ECO:0000269" key="3">
    <source>
    </source>
</evidence>
<evidence type="ECO:0000269" key="4">
    <source>
    </source>
</evidence>
<evidence type="ECO:0000269" key="5">
    <source>
    </source>
</evidence>
<evidence type="ECO:0000303" key="6">
    <source>
    </source>
</evidence>
<evidence type="ECO:0000303" key="7">
    <source>
    </source>
</evidence>
<evidence type="ECO:0000303" key="8">
    <source>
    </source>
</evidence>
<evidence type="ECO:0000303" key="9">
    <source>
    </source>
</evidence>
<evidence type="ECO:0000305" key="10"/>
<evidence type="ECO:0000312" key="11">
    <source>
        <dbReference type="Araport" id="AT1G58340"/>
    </source>
</evidence>
<evidence type="ECO:0000312" key="12">
    <source>
        <dbReference type="EMBL" id="BAA87939.1"/>
    </source>
</evidence>
<dbReference type="EMBL" id="AB028198">
    <property type="protein sequence ID" value="BAA87939.1"/>
    <property type="molecule type" value="mRNA"/>
</dbReference>
<dbReference type="EMBL" id="AC008051">
    <property type="protein sequence ID" value="AAF82254.1"/>
    <property type="molecule type" value="Genomic_DNA"/>
</dbReference>
<dbReference type="EMBL" id="CP002684">
    <property type="protein sequence ID" value="AEE33537.1"/>
    <property type="molecule type" value="Genomic_DNA"/>
</dbReference>
<dbReference type="EMBL" id="AK176206">
    <property type="protein sequence ID" value="BAD43969.1"/>
    <property type="molecule type" value="mRNA"/>
</dbReference>
<dbReference type="EMBL" id="AK176326">
    <property type="protein sequence ID" value="BAD44089.1"/>
    <property type="molecule type" value="mRNA"/>
</dbReference>
<dbReference type="PIR" id="T52442">
    <property type="entry name" value="T52442"/>
</dbReference>
<dbReference type="RefSeq" id="NP_564731.1">
    <property type="nucleotide sequence ID" value="NM_104614.5"/>
</dbReference>
<dbReference type="SMR" id="Q9SLV0"/>
<dbReference type="FunCoup" id="Q9SLV0">
    <property type="interactions" value="8"/>
</dbReference>
<dbReference type="IntAct" id="Q9SLV0">
    <property type="interactions" value="32"/>
</dbReference>
<dbReference type="STRING" id="3702.Q9SLV0"/>
<dbReference type="TCDB" id="2.A.66.1.51">
    <property type="family name" value="the multidrug/oligosaccharidyl-lipid/polysaccharide (mop) flippase superfamily"/>
</dbReference>
<dbReference type="PaxDb" id="3702-AT1G58340.1"/>
<dbReference type="ProteomicsDB" id="220722"/>
<dbReference type="EnsemblPlants" id="AT1G58340.1">
    <property type="protein sequence ID" value="AT1G58340.1"/>
    <property type="gene ID" value="AT1G58340"/>
</dbReference>
<dbReference type="GeneID" id="842203"/>
<dbReference type="Gramene" id="AT1G58340.1">
    <property type="protein sequence ID" value="AT1G58340.1"/>
    <property type="gene ID" value="AT1G58340"/>
</dbReference>
<dbReference type="KEGG" id="ath:AT1G58340"/>
<dbReference type="Araport" id="AT1G58340"/>
<dbReference type="TAIR" id="AT1G58340">
    <property type="gene designation" value="ZF14"/>
</dbReference>
<dbReference type="eggNOG" id="KOG1347">
    <property type="taxonomic scope" value="Eukaryota"/>
</dbReference>
<dbReference type="HOGENOM" id="CLU_012893_1_0_1"/>
<dbReference type="InParanoid" id="Q9SLV0"/>
<dbReference type="OMA" id="FLDTIPW"/>
<dbReference type="OrthoDB" id="2126698at2759"/>
<dbReference type="PhylomeDB" id="Q9SLV0"/>
<dbReference type="PRO" id="PR:Q9SLV0"/>
<dbReference type="Proteomes" id="UP000006548">
    <property type="component" value="Chromosome 1"/>
</dbReference>
<dbReference type="ExpressionAtlas" id="Q9SLV0">
    <property type="expression patterns" value="baseline and differential"/>
</dbReference>
<dbReference type="GO" id="GO:0005794">
    <property type="term" value="C:Golgi apparatus"/>
    <property type="evidence" value="ECO:0000314"/>
    <property type="project" value="UniProtKB"/>
</dbReference>
<dbReference type="GO" id="GO:0000139">
    <property type="term" value="C:Golgi membrane"/>
    <property type="evidence" value="ECO:0007669"/>
    <property type="project" value="UniProtKB-SubCell"/>
</dbReference>
<dbReference type="GO" id="GO:0017119">
    <property type="term" value="C:Golgi transport complex"/>
    <property type="evidence" value="ECO:0000314"/>
    <property type="project" value="TAIR"/>
</dbReference>
<dbReference type="GO" id="GO:0043229">
    <property type="term" value="C:intracellular organelle"/>
    <property type="evidence" value="ECO:0000314"/>
    <property type="project" value="TAIR"/>
</dbReference>
<dbReference type="GO" id="GO:0005770">
    <property type="term" value="C:late endosome"/>
    <property type="evidence" value="ECO:0000314"/>
    <property type="project" value="UniProtKB"/>
</dbReference>
<dbReference type="GO" id="GO:0031902">
    <property type="term" value="C:late endosome membrane"/>
    <property type="evidence" value="ECO:0007669"/>
    <property type="project" value="UniProtKB-SubCell"/>
</dbReference>
<dbReference type="GO" id="GO:0015297">
    <property type="term" value="F:antiporter activity"/>
    <property type="evidence" value="ECO:0007669"/>
    <property type="project" value="InterPro"/>
</dbReference>
<dbReference type="GO" id="GO:0005381">
    <property type="term" value="F:iron ion transmembrane transporter activity"/>
    <property type="evidence" value="ECO:0000316"/>
    <property type="project" value="TAIR"/>
</dbReference>
<dbReference type="GO" id="GO:0042910">
    <property type="term" value="F:xenobiotic transmembrane transporter activity"/>
    <property type="evidence" value="ECO:0000315"/>
    <property type="project" value="UniProtKB"/>
</dbReference>
<dbReference type="GO" id="GO:0006826">
    <property type="term" value="P:iron ion transport"/>
    <property type="evidence" value="ECO:0000316"/>
    <property type="project" value="TAIR"/>
</dbReference>
<dbReference type="GO" id="GO:1905428">
    <property type="term" value="P:regulation of plant organ formation"/>
    <property type="evidence" value="ECO:0000315"/>
    <property type="project" value="TAIR"/>
</dbReference>
<dbReference type="GO" id="GO:0009737">
    <property type="term" value="P:response to abscisic acid"/>
    <property type="evidence" value="ECO:0000270"/>
    <property type="project" value="UniProtKB"/>
</dbReference>
<dbReference type="GO" id="GO:0009646">
    <property type="term" value="P:response to absence of light"/>
    <property type="evidence" value="ECO:0000270"/>
    <property type="project" value="UniProtKB"/>
</dbReference>
<dbReference type="GO" id="GO:0009408">
    <property type="term" value="P:response to heat"/>
    <property type="evidence" value="ECO:0000270"/>
    <property type="project" value="UniProtKB"/>
</dbReference>
<dbReference type="GO" id="GO:0009624">
    <property type="term" value="P:response to nematode"/>
    <property type="evidence" value="ECO:0007007"/>
    <property type="project" value="TAIR"/>
</dbReference>
<dbReference type="GO" id="GO:0006970">
    <property type="term" value="P:response to osmotic stress"/>
    <property type="evidence" value="ECO:0000270"/>
    <property type="project" value="UniProtKB"/>
</dbReference>
<dbReference type="GO" id="GO:0010015">
    <property type="term" value="P:root morphogenesis"/>
    <property type="evidence" value="ECO:0000315"/>
    <property type="project" value="UniProtKB"/>
</dbReference>
<dbReference type="GO" id="GO:1990961">
    <property type="term" value="P:xenobiotic detoxification by transmembrane export across the plasma membrane"/>
    <property type="evidence" value="ECO:0007669"/>
    <property type="project" value="InterPro"/>
</dbReference>
<dbReference type="CDD" id="cd13132">
    <property type="entry name" value="MATE_eukaryotic"/>
    <property type="match status" value="1"/>
</dbReference>
<dbReference type="InterPro" id="IPR045069">
    <property type="entry name" value="MATE_euk"/>
</dbReference>
<dbReference type="InterPro" id="IPR002528">
    <property type="entry name" value="MATE_fam"/>
</dbReference>
<dbReference type="NCBIfam" id="TIGR00797">
    <property type="entry name" value="matE"/>
    <property type="match status" value="1"/>
</dbReference>
<dbReference type="PANTHER" id="PTHR11206">
    <property type="entry name" value="MULTIDRUG RESISTANCE PROTEIN"/>
    <property type="match status" value="1"/>
</dbReference>
<dbReference type="Pfam" id="PF01554">
    <property type="entry name" value="MatE"/>
    <property type="match status" value="2"/>
</dbReference>